<feature type="initiator methionine" description="Removed" evidence="1">
    <location>
        <position position="1"/>
    </location>
</feature>
<feature type="chain" id="PRO_0000180137" description="Acyl carrier protein">
    <location>
        <begin position="2"/>
        <end position="78"/>
    </location>
</feature>
<feature type="domain" description="Carrier" evidence="3">
    <location>
        <begin position="2"/>
        <end position="77"/>
    </location>
</feature>
<feature type="modified residue" description="O-(pantetheine 4'-phosphoryl)serine" evidence="3">
    <location>
        <position position="37"/>
    </location>
</feature>
<dbReference type="EMBL" id="BX950851">
    <property type="protein sequence ID" value="CAG74703.1"/>
    <property type="molecule type" value="Genomic_DNA"/>
</dbReference>
<dbReference type="RefSeq" id="WP_005970506.1">
    <property type="nucleotide sequence ID" value="NC_004547.2"/>
</dbReference>
<dbReference type="SMR" id="Q6D687"/>
<dbReference type="STRING" id="218491.ECA1798"/>
<dbReference type="GeneID" id="93390714"/>
<dbReference type="KEGG" id="eca:ECA1798"/>
<dbReference type="eggNOG" id="COG0236">
    <property type="taxonomic scope" value="Bacteria"/>
</dbReference>
<dbReference type="HOGENOM" id="CLU_108696_5_1_6"/>
<dbReference type="OrthoDB" id="9804551at2"/>
<dbReference type="UniPathway" id="UPA00094"/>
<dbReference type="Proteomes" id="UP000007966">
    <property type="component" value="Chromosome"/>
</dbReference>
<dbReference type="GO" id="GO:0005829">
    <property type="term" value="C:cytosol"/>
    <property type="evidence" value="ECO:0007669"/>
    <property type="project" value="TreeGrafter"/>
</dbReference>
<dbReference type="GO" id="GO:0016020">
    <property type="term" value="C:membrane"/>
    <property type="evidence" value="ECO:0007669"/>
    <property type="project" value="GOC"/>
</dbReference>
<dbReference type="GO" id="GO:0000035">
    <property type="term" value="F:acyl binding"/>
    <property type="evidence" value="ECO:0007669"/>
    <property type="project" value="TreeGrafter"/>
</dbReference>
<dbReference type="GO" id="GO:0000036">
    <property type="term" value="F:acyl carrier activity"/>
    <property type="evidence" value="ECO:0007669"/>
    <property type="project" value="UniProtKB-UniRule"/>
</dbReference>
<dbReference type="GO" id="GO:0009245">
    <property type="term" value="P:lipid A biosynthetic process"/>
    <property type="evidence" value="ECO:0007669"/>
    <property type="project" value="TreeGrafter"/>
</dbReference>
<dbReference type="FunFam" id="1.10.1200.10:FF:000001">
    <property type="entry name" value="Acyl carrier protein"/>
    <property type="match status" value="1"/>
</dbReference>
<dbReference type="Gene3D" id="1.10.1200.10">
    <property type="entry name" value="ACP-like"/>
    <property type="match status" value="1"/>
</dbReference>
<dbReference type="HAMAP" id="MF_01217">
    <property type="entry name" value="Acyl_carrier"/>
    <property type="match status" value="1"/>
</dbReference>
<dbReference type="InterPro" id="IPR003231">
    <property type="entry name" value="ACP"/>
</dbReference>
<dbReference type="InterPro" id="IPR036736">
    <property type="entry name" value="ACP-like_sf"/>
</dbReference>
<dbReference type="InterPro" id="IPR009081">
    <property type="entry name" value="PP-bd_ACP"/>
</dbReference>
<dbReference type="InterPro" id="IPR006162">
    <property type="entry name" value="Ppantetheine_attach_site"/>
</dbReference>
<dbReference type="NCBIfam" id="TIGR00517">
    <property type="entry name" value="acyl_carrier"/>
    <property type="match status" value="1"/>
</dbReference>
<dbReference type="NCBIfam" id="NF002148">
    <property type="entry name" value="PRK00982.1-2"/>
    <property type="match status" value="1"/>
</dbReference>
<dbReference type="NCBIfam" id="NF002149">
    <property type="entry name" value="PRK00982.1-3"/>
    <property type="match status" value="1"/>
</dbReference>
<dbReference type="NCBIfam" id="NF002150">
    <property type="entry name" value="PRK00982.1-4"/>
    <property type="match status" value="1"/>
</dbReference>
<dbReference type="NCBIfam" id="NF002151">
    <property type="entry name" value="PRK00982.1-5"/>
    <property type="match status" value="1"/>
</dbReference>
<dbReference type="PANTHER" id="PTHR20863">
    <property type="entry name" value="ACYL CARRIER PROTEIN"/>
    <property type="match status" value="1"/>
</dbReference>
<dbReference type="PANTHER" id="PTHR20863:SF76">
    <property type="entry name" value="CARRIER DOMAIN-CONTAINING PROTEIN"/>
    <property type="match status" value="1"/>
</dbReference>
<dbReference type="Pfam" id="PF00550">
    <property type="entry name" value="PP-binding"/>
    <property type="match status" value="1"/>
</dbReference>
<dbReference type="SUPFAM" id="SSF47336">
    <property type="entry name" value="ACP-like"/>
    <property type="match status" value="1"/>
</dbReference>
<dbReference type="PROSITE" id="PS50075">
    <property type="entry name" value="CARRIER"/>
    <property type="match status" value="1"/>
</dbReference>
<dbReference type="PROSITE" id="PS00012">
    <property type="entry name" value="PHOSPHOPANTETHEINE"/>
    <property type="match status" value="1"/>
</dbReference>
<organism>
    <name type="scientific">Pectobacterium atrosepticum (strain SCRI 1043 / ATCC BAA-672)</name>
    <name type="common">Erwinia carotovora subsp. atroseptica</name>
    <dbReference type="NCBI Taxonomy" id="218491"/>
    <lineage>
        <taxon>Bacteria</taxon>
        <taxon>Pseudomonadati</taxon>
        <taxon>Pseudomonadota</taxon>
        <taxon>Gammaproteobacteria</taxon>
        <taxon>Enterobacterales</taxon>
        <taxon>Pectobacteriaceae</taxon>
        <taxon>Pectobacterium</taxon>
    </lineage>
</organism>
<protein>
    <recommendedName>
        <fullName evidence="2">Acyl carrier protein</fullName>
        <shortName evidence="2">ACP</shortName>
    </recommendedName>
</protein>
<sequence length="78" mass="8712">MSTIEERVKKIIVEQLGVKQEEVVNNASFVDDLGADSLDTVELVMALEEEFDTEIPDEEAEKITTVQAAIDFIQANQQ</sequence>
<comment type="function">
    <text evidence="2">Carrier of the growing fatty acid chain in fatty acid biosynthesis.</text>
</comment>
<comment type="pathway">
    <text evidence="2">Lipid metabolism; fatty acid biosynthesis.</text>
</comment>
<comment type="subcellular location">
    <subcellularLocation>
        <location evidence="2">Cytoplasm</location>
    </subcellularLocation>
</comment>
<comment type="PTM">
    <text evidence="2">4'-phosphopantetheine is transferred from CoA to a specific serine of apo-ACP by AcpS. This modification is essential for activity because fatty acids are bound in thioester linkage to the sulfhydryl of the prosthetic group.</text>
</comment>
<comment type="similarity">
    <text evidence="2">Belongs to the acyl carrier protein (ACP) family.</text>
</comment>
<keyword id="KW-0963">Cytoplasm</keyword>
<keyword id="KW-0275">Fatty acid biosynthesis</keyword>
<keyword id="KW-0276">Fatty acid metabolism</keyword>
<keyword id="KW-0444">Lipid biosynthesis</keyword>
<keyword id="KW-0443">Lipid metabolism</keyword>
<keyword id="KW-0596">Phosphopantetheine</keyword>
<keyword id="KW-0597">Phosphoprotein</keyword>
<keyword id="KW-1185">Reference proteome</keyword>
<evidence type="ECO:0000250" key="1"/>
<evidence type="ECO:0000255" key="2">
    <source>
        <dbReference type="HAMAP-Rule" id="MF_01217"/>
    </source>
</evidence>
<evidence type="ECO:0000255" key="3">
    <source>
        <dbReference type="PROSITE-ProRule" id="PRU00258"/>
    </source>
</evidence>
<name>ACP_PECAS</name>
<gene>
    <name evidence="2" type="primary">acpP</name>
    <name type="ordered locus">ECA1798</name>
</gene>
<accession>Q6D687</accession>
<proteinExistence type="inferred from homology"/>
<reference key="1">
    <citation type="journal article" date="2004" name="Proc. Natl. Acad. Sci. U.S.A.">
        <title>Genome sequence of the enterobacterial phytopathogen Erwinia carotovora subsp. atroseptica and characterization of virulence factors.</title>
        <authorList>
            <person name="Bell K.S."/>
            <person name="Sebaihia M."/>
            <person name="Pritchard L."/>
            <person name="Holden M.T.G."/>
            <person name="Hyman L.J."/>
            <person name="Holeva M.C."/>
            <person name="Thomson N.R."/>
            <person name="Bentley S.D."/>
            <person name="Churcher L.J.C."/>
            <person name="Mungall K."/>
            <person name="Atkin R."/>
            <person name="Bason N."/>
            <person name="Brooks K."/>
            <person name="Chillingworth T."/>
            <person name="Clark K."/>
            <person name="Doggett J."/>
            <person name="Fraser A."/>
            <person name="Hance Z."/>
            <person name="Hauser H."/>
            <person name="Jagels K."/>
            <person name="Moule S."/>
            <person name="Norbertczak H."/>
            <person name="Ormond D."/>
            <person name="Price C."/>
            <person name="Quail M.A."/>
            <person name="Sanders M."/>
            <person name="Walker D."/>
            <person name="Whitehead S."/>
            <person name="Salmond G.P.C."/>
            <person name="Birch P.R.J."/>
            <person name="Parkhill J."/>
            <person name="Toth I.K."/>
        </authorList>
    </citation>
    <scope>NUCLEOTIDE SEQUENCE [LARGE SCALE GENOMIC DNA]</scope>
    <source>
        <strain>SCRI 1043 / ATCC BAA-672</strain>
    </source>
</reference>